<comment type="function">
    <text evidence="1">Specifically catalyzes the NAD or NADP-dependent dehydrogenation of L-aspartate to iminoaspartate.</text>
</comment>
<comment type="catalytic activity">
    <reaction evidence="1">
        <text>L-aspartate + NADP(+) + H2O = oxaloacetate + NH4(+) + NADPH + H(+)</text>
        <dbReference type="Rhea" id="RHEA:11784"/>
        <dbReference type="ChEBI" id="CHEBI:15377"/>
        <dbReference type="ChEBI" id="CHEBI:15378"/>
        <dbReference type="ChEBI" id="CHEBI:16452"/>
        <dbReference type="ChEBI" id="CHEBI:28938"/>
        <dbReference type="ChEBI" id="CHEBI:29991"/>
        <dbReference type="ChEBI" id="CHEBI:57783"/>
        <dbReference type="ChEBI" id="CHEBI:58349"/>
        <dbReference type="EC" id="1.4.1.21"/>
    </reaction>
</comment>
<comment type="catalytic activity">
    <reaction evidence="1">
        <text>L-aspartate + NAD(+) + H2O = oxaloacetate + NH4(+) + NADH + H(+)</text>
        <dbReference type="Rhea" id="RHEA:11788"/>
        <dbReference type="ChEBI" id="CHEBI:15377"/>
        <dbReference type="ChEBI" id="CHEBI:15378"/>
        <dbReference type="ChEBI" id="CHEBI:16452"/>
        <dbReference type="ChEBI" id="CHEBI:28938"/>
        <dbReference type="ChEBI" id="CHEBI:29991"/>
        <dbReference type="ChEBI" id="CHEBI:57540"/>
        <dbReference type="ChEBI" id="CHEBI:57945"/>
        <dbReference type="EC" id="1.4.1.21"/>
    </reaction>
</comment>
<comment type="pathway">
    <text evidence="1">Cofactor biosynthesis; NAD(+) biosynthesis; iminoaspartate from L-aspartate (dehydrogenase route): step 1/1.</text>
</comment>
<comment type="miscellaneous">
    <text evidence="1">The iminoaspartate product is unstable in aqueous solution and can decompose to oxaloacetate and ammonia.</text>
</comment>
<comment type="similarity">
    <text evidence="1">Belongs to the L-aspartate dehydrogenase family.</text>
</comment>
<protein>
    <recommendedName>
        <fullName evidence="1">L-aspartate dehydrogenase</fullName>
        <ecNumber evidence="1">1.4.1.21</ecNumber>
    </recommendedName>
</protein>
<evidence type="ECO:0000255" key="1">
    <source>
        <dbReference type="HAMAP-Rule" id="MF_01265"/>
    </source>
</evidence>
<name>ASPD_THESQ</name>
<feature type="chain" id="PRO_1000140090" description="L-aspartate dehydrogenase">
    <location>
        <begin position="1"/>
        <end position="241"/>
    </location>
</feature>
<feature type="active site" evidence="1">
    <location>
        <position position="193"/>
    </location>
</feature>
<feature type="binding site" evidence="1">
    <location>
        <position position="109"/>
    </location>
    <ligand>
        <name>NAD(+)</name>
        <dbReference type="ChEBI" id="CHEBI:57540"/>
    </ligand>
</feature>
<feature type="binding site" evidence="1">
    <location>
        <position position="164"/>
    </location>
    <ligand>
        <name>NAD(+)</name>
        <dbReference type="ChEBI" id="CHEBI:57540"/>
    </ligand>
</feature>
<organism>
    <name type="scientific">Thermotoga sp. (strain RQ2)</name>
    <dbReference type="NCBI Taxonomy" id="126740"/>
    <lineage>
        <taxon>Bacteria</taxon>
        <taxon>Thermotogati</taxon>
        <taxon>Thermotogota</taxon>
        <taxon>Thermotogae</taxon>
        <taxon>Thermotogales</taxon>
        <taxon>Thermotogaceae</taxon>
        <taxon>Thermotoga</taxon>
    </lineage>
</organism>
<dbReference type="EC" id="1.4.1.21" evidence="1"/>
<dbReference type="EMBL" id="CP000969">
    <property type="protein sequence ID" value="ACB09530.1"/>
    <property type="molecule type" value="Genomic_DNA"/>
</dbReference>
<dbReference type="RefSeq" id="WP_012311001.1">
    <property type="nucleotide sequence ID" value="NC_010483.1"/>
</dbReference>
<dbReference type="SMR" id="B1LB32"/>
<dbReference type="KEGG" id="trq:TRQ2_1186"/>
<dbReference type="HOGENOM" id="CLU_089550_0_0_0"/>
<dbReference type="UniPathway" id="UPA00253">
    <property type="reaction ID" value="UER00456"/>
</dbReference>
<dbReference type="Proteomes" id="UP000001687">
    <property type="component" value="Chromosome"/>
</dbReference>
<dbReference type="GO" id="GO:0033735">
    <property type="term" value="F:aspartate dehydrogenase activity"/>
    <property type="evidence" value="ECO:0007669"/>
    <property type="project" value="UniProtKB-EC"/>
</dbReference>
<dbReference type="GO" id="GO:0051287">
    <property type="term" value="F:NAD binding"/>
    <property type="evidence" value="ECO:0007669"/>
    <property type="project" value="UniProtKB-UniRule"/>
</dbReference>
<dbReference type="GO" id="GO:0050661">
    <property type="term" value="F:NADP binding"/>
    <property type="evidence" value="ECO:0007669"/>
    <property type="project" value="UniProtKB-UniRule"/>
</dbReference>
<dbReference type="GO" id="GO:0016639">
    <property type="term" value="F:oxidoreductase activity, acting on the CH-NH2 group of donors, NAD or NADP as acceptor"/>
    <property type="evidence" value="ECO:0007669"/>
    <property type="project" value="UniProtKB-UniRule"/>
</dbReference>
<dbReference type="GO" id="GO:0009435">
    <property type="term" value="P:NAD biosynthetic process"/>
    <property type="evidence" value="ECO:0007669"/>
    <property type="project" value="UniProtKB-UniRule"/>
</dbReference>
<dbReference type="Gene3D" id="3.30.360.10">
    <property type="entry name" value="Dihydrodipicolinate Reductase, domain 2"/>
    <property type="match status" value="1"/>
</dbReference>
<dbReference type="Gene3D" id="3.40.50.720">
    <property type="entry name" value="NAD(P)-binding Rossmann-like Domain"/>
    <property type="match status" value="1"/>
</dbReference>
<dbReference type="HAMAP" id="MF_01265">
    <property type="entry name" value="NadX"/>
    <property type="match status" value="1"/>
</dbReference>
<dbReference type="InterPro" id="IPR005106">
    <property type="entry name" value="Asp/hSer_DH_NAD-bd"/>
</dbReference>
<dbReference type="InterPro" id="IPR002811">
    <property type="entry name" value="Asp_DH"/>
</dbReference>
<dbReference type="InterPro" id="IPR022487">
    <property type="entry name" value="Asp_DH_arc"/>
</dbReference>
<dbReference type="InterPro" id="IPR020626">
    <property type="entry name" value="Asp_DH_prok"/>
</dbReference>
<dbReference type="InterPro" id="IPR011182">
    <property type="entry name" value="L-Asp_DH"/>
</dbReference>
<dbReference type="InterPro" id="IPR036291">
    <property type="entry name" value="NAD(P)-bd_dom_sf"/>
</dbReference>
<dbReference type="NCBIfam" id="TIGR03855">
    <property type="entry name" value="NAD_NadX"/>
    <property type="match status" value="1"/>
</dbReference>
<dbReference type="NCBIfam" id="NF009829">
    <property type="entry name" value="PRK13303.1-4"/>
    <property type="match status" value="1"/>
</dbReference>
<dbReference type="PANTHER" id="PTHR31873:SF6">
    <property type="entry name" value="ASPARTATE DEHYDROGENASE DOMAIN-CONTAINING PROTEIN"/>
    <property type="match status" value="1"/>
</dbReference>
<dbReference type="PANTHER" id="PTHR31873">
    <property type="entry name" value="L-ASPARTATE DEHYDROGENASE-RELATED"/>
    <property type="match status" value="1"/>
</dbReference>
<dbReference type="Pfam" id="PF01958">
    <property type="entry name" value="Asp_DH_C"/>
    <property type="match status" value="1"/>
</dbReference>
<dbReference type="Pfam" id="PF03447">
    <property type="entry name" value="NAD_binding_3"/>
    <property type="match status" value="1"/>
</dbReference>
<dbReference type="PIRSF" id="PIRSF005227">
    <property type="entry name" value="Asp_dh_NAD_syn"/>
    <property type="match status" value="1"/>
</dbReference>
<dbReference type="SUPFAM" id="SSF55347">
    <property type="entry name" value="Glyceraldehyde-3-phosphate dehydrogenase-like, C-terminal domain"/>
    <property type="match status" value="1"/>
</dbReference>
<dbReference type="SUPFAM" id="SSF51735">
    <property type="entry name" value="NAD(P)-binding Rossmann-fold domains"/>
    <property type="match status" value="1"/>
</dbReference>
<accession>B1LB32</accession>
<sequence length="241" mass="26499">MTVLIIGMGNIGKKLVELGNFEKIYAYDRISKDIPGVVRLGEFQVPSDVSTVVECASPEAVKEYSLQILKSPVNYIIISTSAFADEVFRERFFSELKNSPARVFFPSGAIGGLDVLSSIKDFVETVRIETIKPPKSLGLDLKGKTVVFEGSVEEASKLFPRNINVASTIGLIVGFEKVKVTIVADPAMDHNIHIVRISSAIGNYEFKIENIPSPENPKTSMLTVYSILRALRNLESKIVFG</sequence>
<gene>
    <name evidence="1" type="primary">nadX</name>
    <name type="ordered locus">TRQ2_1186</name>
</gene>
<keyword id="KW-0520">NAD</keyword>
<keyword id="KW-0521">NADP</keyword>
<keyword id="KW-0560">Oxidoreductase</keyword>
<keyword id="KW-0662">Pyridine nucleotide biosynthesis</keyword>
<proteinExistence type="inferred from homology"/>
<reference key="1">
    <citation type="journal article" date="2011" name="J. Bacteriol.">
        <title>Genome sequence of Thermotoga sp. strain RQ2, a hyperthermophilic bacterium isolated from a geothermally heated region of the seafloor near Ribeira Quente, the Azores.</title>
        <authorList>
            <person name="Swithers K.S."/>
            <person name="DiPippo J.L."/>
            <person name="Bruce D.C."/>
            <person name="Detter C."/>
            <person name="Tapia R."/>
            <person name="Han S."/>
            <person name="Saunders E."/>
            <person name="Goodwin L.A."/>
            <person name="Han J."/>
            <person name="Woyke T."/>
            <person name="Pitluck S."/>
            <person name="Pennacchio L."/>
            <person name="Nolan M."/>
            <person name="Mikhailova N."/>
            <person name="Lykidis A."/>
            <person name="Land M.L."/>
            <person name="Brettin T."/>
            <person name="Stetter K.O."/>
            <person name="Nelson K.E."/>
            <person name="Gogarten J.P."/>
            <person name="Noll K.M."/>
        </authorList>
    </citation>
    <scope>NUCLEOTIDE SEQUENCE [LARGE SCALE GENOMIC DNA]</scope>
    <source>
        <strain>RQ2</strain>
    </source>
</reference>